<protein>
    <recommendedName>
        <fullName evidence="3">Conotoxin ba9a</fullName>
    </recommendedName>
</protein>
<sequence>MHLSLARSAGLMWLLLFAVGNFVGVQPGQITRDVDNGQLADNRRNLQSLRKPMTLFKSLNKRVSCGEYCGDYGDCPSSCPTCTSNLLKCM</sequence>
<keyword id="KW-0903">Direct protein sequencing</keyword>
<keyword id="KW-0301">Gamma-carboxyglutamic acid</keyword>
<keyword id="KW-0379">Hydroxylation</keyword>
<keyword id="KW-0964">Secreted</keyword>
<keyword id="KW-0732">Signal</keyword>
<keyword id="KW-0800">Toxin</keyword>
<reference key="1">
    <citation type="journal article" date="2021" name="Mar. Drugs">
        <title>Diversity of Conopeptides and Conoenzymes from the Venom Duct of the Marine Cone Snail Conus bayani as Determined from Transcriptomic and Proteomic Analyses.</title>
        <authorList>
            <person name="Rajaian Pushpabai R."/>
            <person name="Wilson Alphonse C.R."/>
            <person name="Mani R."/>
            <person name="Arun Apte D."/>
            <person name="Franklin J.B."/>
        </authorList>
    </citation>
    <scope>NUCLEOTIDE SEQUENCE [MRNA]</scope>
    <scope>PROTEIN SEQUENCE OF 63-90</scope>
    <scope>MASS SPECTROMETRY</scope>
    <scope>SUBCELLULAR LOCATION</scope>
    <scope>GAMMA-CARBOXYGLUTAMATION AT GLU-67</scope>
    <scope>HYDROXYLATION AT PRO-76 AND PRO-80</scope>
    <source>
        <tissue>Venom</tissue>
        <tissue>Venom duct</tissue>
    </source>
</reference>
<comment type="subcellular location">
    <subcellularLocation>
        <location evidence="2">Secreted</location>
    </subcellularLocation>
</comment>
<comment type="tissue specificity">
    <text evidence="5">Expressed by the venom duct.</text>
</comment>
<comment type="domain">
    <text evidence="4">The cysteine framework is IX (C-C-C-C-C-C-C-C-C).</text>
</comment>
<comment type="mass spectrometry"/>
<comment type="similarity">
    <text evidence="4">Belongs to the conotoxin P superfamily.</text>
</comment>
<name>CP9A_CONBY</name>
<feature type="signal peptide" evidence="1">
    <location>
        <begin position="1"/>
        <end position="27"/>
    </location>
</feature>
<feature type="propeptide" id="PRO_0000454990" evidence="5">
    <location>
        <begin position="28"/>
        <end position="62"/>
    </location>
</feature>
<feature type="peptide" id="PRO_0000454991" description="Conotoxin ba9a" evidence="2">
    <location>
        <begin position="63"/>
        <end position="90"/>
    </location>
</feature>
<feature type="modified residue" description="4-carboxyglutamate" evidence="2">
    <location>
        <position position="67"/>
    </location>
</feature>
<feature type="modified residue" description="4-hydroxyproline" evidence="2">
    <location>
        <position position="76"/>
    </location>
</feature>
<feature type="modified residue" description="4-hydroxyproline" evidence="2">
    <location>
        <position position="80"/>
    </location>
</feature>
<evidence type="ECO:0000255" key="1"/>
<evidence type="ECO:0000269" key="2">
    <source>
    </source>
</evidence>
<evidence type="ECO:0000303" key="3">
    <source>
    </source>
</evidence>
<evidence type="ECO:0000305" key="4"/>
<evidence type="ECO:0000305" key="5">
    <source>
    </source>
</evidence>
<accession>P0DTJ6</accession>
<organism>
    <name type="scientific">Conus bayani</name>
    <name type="common">Bayan's cone</name>
    <name type="synonym">Stellaconus bayani</name>
    <dbReference type="NCBI Taxonomy" id="2070216"/>
    <lineage>
        <taxon>Eukaryota</taxon>
        <taxon>Metazoa</taxon>
        <taxon>Spiralia</taxon>
        <taxon>Lophotrochozoa</taxon>
        <taxon>Mollusca</taxon>
        <taxon>Gastropoda</taxon>
        <taxon>Caenogastropoda</taxon>
        <taxon>Neogastropoda</taxon>
        <taxon>Conoidea</taxon>
        <taxon>Conidae</taxon>
        <taxon>Conus</taxon>
        <taxon>Splinoconus</taxon>
    </lineage>
</organism>
<dbReference type="GO" id="GO:0005576">
    <property type="term" value="C:extracellular region"/>
    <property type="evidence" value="ECO:0007669"/>
    <property type="project" value="UniProtKB-SubCell"/>
</dbReference>
<dbReference type="GO" id="GO:0090729">
    <property type="term" value="F:toxin activity"/>
    <property type="evidence" value="ECO:0007669"/>
    <property type="project" value="UniProtKB-KW"/>
</dbReference>
<proteinExistence type="evidence at protein level"/>